<comment type="function">
    <text evidence="1">Catalyzes the decarboxylation of 3-octaprenyl-4-hydroxy benzoate to 2-octaprenylphenol, an intermediate step in ubiquinone biosynthesis.</text>
</comment>
<comment type="catalytic activity">
    <reaction evidence="1">
        <text>a 4-hydroxy-3-(all-trans-polyprenyl)benzoate + H(+) = a 2-(all-trans-polyprenyl)phenol + CO2</text>
        <dbReference type="Rhea" id="RHEA:41680"/>
        <dbReference type="Rhea" id="RHEA-COMP:9514"/>
        <dbReference type="Rhea" id="RHEA-COMP:9516"/>
        <dbReference type="ChEBI" id="CHEBI:1269"/>
        <dbReference type="ChEBI" id="CHEBI:15378"/>
        <dbReference type="ChEBI" id="CHEBI:16526"/>
        <dbReference type="ChEBI" id="CHEBI:78396"/>
        <dbReference type="EC" id="4.1.1.98"/>
    </reaction>
</comment>
<comment type="cofactor">
    <cofactor evidence="1">
        <name>prenylated FMN</name>
        <dbReference type="ChEBI" id="CHEBI:87746"/>
    </cofactor>
    <text evidence="1">Binds 1 prenylated FMN per subunit.</text>
</comment>
<comment type="cofactor">
    <cofactor evidence="1">
        <name>Mn(2+)</name>
        <dbReference type="ChEBI" id="CHEBI:29035"/>
    </cofactor>
</comment>
<comment type="pathway">
    <text evidence="1">Cofactor biosynthesis; ubiquinone biosynthesis.</text>
</comment>
<comment type="subunit">
    <text evidence="1">Homohexamer.</text>
</comment>
<comment type="subcellular location">
    <subcellularLocation>
        <location evidence="1">Cell membrane</location>
        <topology evidence="1">Peripheral membrane protein</topology>
    </subcellularLocation>
</comment>
<comment type="similarity">
    <text evidence="1">Belongs to the UbiD family.</text>
</comment>
<organism>
    <name type="scientific">Citrobacter koseri (strain ATCC BAA-895 / CDC 4225-83 / SGSC4696)</name>
    <dbReference type="NCBI Taxonomy" id="290338"/>
    <lineage>
        <taxon>Bacteria</taxon>
        <taxon>Pseudomonadati</taxon>
        <taxon>Pseudomonadota</taxon>
        <taxon>Gammaproteobacteria</taxon>
        <taxon>Enterobacterales</taxon>
        <taxon>Enterobacteriaceae</taxon>
        <taxon>Citrobacter</taxon>
    </lineage>
</organism>
<proteinExistence type="inferred from homology"/>
<feature type="chain" id="PRO_1000069844" description="3-octaprenyl-4-hydroxybenzoate carboxy-lyase">
    <location>
        <begin position="1"/>
        <end position="494"/>
    </location>
</feature>
<feature type="active site" description="Proton donor" evidence="1">
    <location>
        <position position="287"/>
    </location>
</feature>
<feature type="binding site" evidence="1">
    <location>
        <position position="172"/>
    </location>
    <ligand>
        <name>Mn(2+)</name>
        <dbReference type="ChEBI" id="CHEBI:29035"/>
    </ligand>
</feature>
<feature type="binding site" evidence="1">
    <location>
        <begin position="175"/>
        <end position="177"/>
    </location>
    <ligand>
        <name>prenylated FMN</name>
        <dbReference type="ChEBI" id="CHEBI:87746"/>
    </ligand>
</feature>
<feature type="binding site" evidence="1">
    <location>
        <begin position="189"/>
        <end position="191"/>
    </location>
    <ligand>
        <name>prenylated FMN</name>
        <dbReference type="ChEBI" id="CHEBI:87746"/>
    </ligand>
</feature>
<feature type="binding site" evidence="1">
    <location>
        <begin position="194"/>
        <end position="195"/>
    </location>
    <ligand>
        <name>prenylated FMN</name>
        <dbReference type="ChEBI" id="CHEBI:87746"/>
    </ligand>
</feature>
<feature type="binding site" evidence="1">
    <location>
        <position position="238"/>
    </location>
    <ligand>
        <name>Mn(2+)</name>
        <dbReference type="ChEBI" id="CHEBI:29035"/>
    </ligand>
</feature>
<protein>
    <recommendedName>
        <fullName evidence="1">3-octaprenyl-4-hydroxybenzoate carboxy-lyase</fullName>
        <ecNumber evidence="1">4.1.1.98</ecNumber>
    </recommendedName>
    <alternativeName>
        <fullName evidence="1">Polyprenyl p-hydroxybenzoate decarboxylase</fullName>
    </alternativeName>
</protein>
<dbReference type="EC" id="4.1.1.98" evidence="1"/>
<dbReference type="EMBL" id="CP000822">
    <property type="protein sequence ID" value="ABV11353.1"/>
    <property type="molecule type" value="Genomic_DNA"/>
</dbReference>
<dbReference type="RefSeq" id="WP_012131187.1">
    <property type="nucleotide sequence ID" value="NC_009792.1"/>
</dbReference>
<dbReference type="SMR" id="A8ACZ0"/>
<dbReference type="STRING" id="290338.CKO_00184"/>
<dbReference type="GeneID" id="45134475"/>
<dbReference type="KEGG" id="cko:CKO_00184"/>
<dbReference type="HOGENOM" id="CLU_023348_4_1_6"/>
<dbReference type="OrthoDB" id="9809841at2"/>
<dbReference type="UniPathway" id="UPA00232"/>
<dbReference type="Proteomes" id="UP000008148">
    <property type="component" value="Chromosome"/>
</dbReference>
<dbReference type="GO" id="GO:0005829">
    <property type="term" value="C:cytosol"/>
    <property type="evidence" value="ECO:0007669"/>
    <property type="project" value="TreeGrafter"/>
</dbReference>
<dbReference type="GO" id="GO:0005886">
    <property type="term" value="C:plasma membrane"/>
    <property type="evidence" value="ECO:0007669"/>
    <property type="project" value="UniProtKB-SubCell"/>
</dbReference>
<dbReference type="GO" id="GO:0008694">
    <property type="term" value="F:3-octaprenyl-4-hydroxybenzoate carboxy-lyase activity"/>
    <property type="evidence" value="ECO:0007669"/>
    <property type="project" value="UniProtKB-UniRule"/>
</dbReference>
<dbReference type="GO" id="GO:0046872">
    <property type="term" value="F:metal ion binding"/>
    <property type="evidence" value="ECO:0007669"/>
    <property type="project" value="UniProtKB-KW"/>
</dbReference>
<dbReference type="GO" id="GO:0006744">
    <property type="term" value="P:ubiquinone biosynthetic process"/>
    <property type="evidence" value="ECO:0007669"/>
    <property type="project" value="UniProtKB-UniRule"/>
</dbReference>
<dbReference type="FunFam" id="1.20.5.570:FF:000001">
    <property type="entry name" value="3-octaprenyl-4-hydroxybenzoate carboxy-lyase"/>
    <property type="match status" value="1"/>
</dbReference>
<dbReference type="FunFam" id="3.40.1670.10:FF:000001">
    <property type="entry name" value="3-octaprenyl-4-hydroxybenzoate carboxy-lyase"/>
    <property type="match status" value="1"/>
</dbReference>
<dbReference type="Gene3D" id="1.20.5.570">
    <property type="entry name" value="Single helix bin"/>
    <property type="match status" value="1"/>
</dbReference>
<dbReference type="Gene3D" id="3.40.1670.10">
    <property type="entry name" value="UbiD C-terminal domain-like"/>
    <property type="match status" value="1"/>
</dbReference>
<dbReference type="HAMAP" id="MF_01636">
    <property type="entry name" value="UbiD"/>
    <property type="match status" value="1"/>
</dbReference>
<dbReference type="InterPro" id="IPR002830">
    <property type="entry name" value="UbiD"/>
</dbReference>
<dbReference type="InterPro" id="IPR049381">
    <property type="entry name" value="UbiD-like_C"/>
</dbReference>
<dbReference type="InterPro" id="IPR049383">
    <property type="entry name" value="UbiD-like_N"/>
</dbReference>
<dbReference type="InterPro" id="IPR023677">
    <property type="entry name" value="UbiD_bacteria"/>
</dbReference>
<dbReference type="InterPro" id="IPR048304">
    <property type="entry name" value="UbiD_Rift_dom"/>
</dbReference>
<dbReference type="NCBIfam" id="NF008175">
    <property type="entry name" value="PRK10922.1"/>
    <property type="match status" value="1"/>
</dbReference>
<dbReference type="NCBIfam" id="TIGR00148">
    <property type="entry name" value="UbiD family decarboxylase"/>
    <property type="match status" value="1"/>
</dbReference>
<dbReference type="PANTHER" id="PTHR30108">
    <property type="entry name" value="3-OCTAPRENYL-4-HYDROXYBENZOATE CARBOXY-LYASE-RELATED"/>
    <property type="match status" value="1"/>
</dbReference>
<dbReference type="PANTHER" id="PTHR30108:SF17">
    <property type="entry name" value="FERULIC ACID DECARBOXYLASE 1"/>
    <property type="match status" value="1"/>
</dbReference>
<dbReference type="Pfam" id="PF01977">
    <property type="entry name" value="UbiD"/>
    <property type="match status" value="1"/>
</dbReference>
<dbReference type="Pfam" id="PF20696">
    <property type="entry name" value="UbiD_C"/>
    <property type="match status" value="1"/>
</dbReference>
<dbReference type="Pfam" id="PF20695">
    <property type="entry name" value="UbiD_N"/>
    <property type="match status" value="1"/>
</dbReference>
<dbReference type="SUPFAM" id="SSF50475">
    <property type="entry name" value="FMN-binding split barrel"/>
    <property type="match status" value="1"/>
</dbReference>
<dbReference type="SUPFAM" id="SSF143968">
    <property type="entry name" value="UbiD C-terminal domain-like"/>
    <property type="match status" value="1"/>
</dbReference>
<gene>
    <name evidence="1" type="primary">ubiD</name>
    <name type="ordered locus">CKO_00184</name>
</gene>
<sequence>MKYHDLRDFLTLLEQQGELKRITLAVDPHLEMTEIADRTLRAGGPALLFENPKGYAMPVLCNLFGTPRRVAMGMGQEDVTALREVGKLLAFLKEPEPPKGFRDLFDKLPQFKQVLNMPTKRLRGAPCQQKVFSGDDVDLQRIPIMTCWPEDAAPLITWGLTVTRGPHKERQNLGIYRQQLIGKNKLIMRWLSHRGGALDFQEWCAAHPGERFPIAVALGADPATILGAVTPVPDTLSEYAFAGLLRGTKTEVVKCLSSDLEVPASAEIVLEGYIEPGEMAAEGPYGDHTGYYNEVDNFPVFTVTHITQREDAIYHSTYTGRPPDEPAVLGVALNEVFVPILQKQFPEIVDFYLPPEGCSYRLAVVTMKKQYAGHAKRVMMGVWSFLRQFMYTKFVIVCDDDVNARDWNDVIWAITTRMDPARDTVLVENTPIDYLDFASPISGLGSKMGLDATNKWPGETQREWGRPIKKDPEVTARIDAIWDELAIFNDGKGA</sequence>
<accession>A8ACZ0</accession>
<reference key="1">
    <citation type="submission" date="2007-08" db="EMBL/GenBank/DDBJ databases">
        <authorList>
            <consortium name="The Citrobacter koseri Genome Sequencing Project"/>
            <person name="McClelland M."/>
            <person name="Sanderson E.K."/>
            <person name="Porwollik S."/>
            <person name="Spieth J."/>
            <person name="Clifton W.S."/>
            <person name="Latreille P."/>
            <person name="Courtney L."/>
            <person name="Wang C."/>
            <person name="Pepin K."/>
            <person name="Bhonagiri V."/>
            <person name="Nash W."/>
            <person name="Johnson M."/>
            <person name="Thiruvilangam P."/>
            <person name="Wilson R."/>
        </authorList>
    </citation>
    <scope>NUCLEOTIDE SEQUENCE [LARGE SCALE GENOMIC DNA]</scope>
    <source>
        <strain>ATCC BAA-895 / CDC 4225-83 / SGSC4696</strain>
    </source>
</reference>
<keyword id="KW-1003">Cell membrane</keyword>
<keyword id="KW-0210">Decarboxylase</keyword>
<keyword id="KW-0285">Flavoprotein</keyword>
<keyword id="KW-0288">FMN</keyword>
<keyword id="KW-0456">Lyase</keyword>
<keyword id="KW-0464">Manganese</keyword>
<keyword id="KW-0472">Membrane</keyword>
<keyword id="KW-0479">Metal-binding</keyword>
<keyword id="KW-1185">Reference proteome</keyword>
<keyword id="KW-0831">Ubiquinone biosynthesis</keyword>
<evidence type="ECO:0000255" key="1">
    <source>
        <dbReference type="HAMAP-Rule" id="MF_01636"/>
    </source>
</evidence>
<name>UBID_CITK8</name>